<reference key="1">
    <citation type="journal article" date="1998" name="Syst. Appl. Microbiol.">
        <title>Characterization of the genes for the biosynthesis of the compatible solute ectoine in the moderately halophilic bacterium Halomonas elongata DSM 3043.</title>
        <authorList>
            <person name="Canovas D."/>
            <person name="Vargas C."/>
            <person name="Calderon M.I."/>
            <person name="Ventosa A."/>
            <person name="Nieto J.J."/>
        </authorList>
    </citation>
    <scope>NUCLEOTIDE SEQUENCE [GENOMIC DNA]</scope>
</reference>
<reference key="2">
    <citation type="journal article" date="2011" name="Stand. Genomic Sci.">
        <title>Complete genome sequence of the halophilic and highly halotolerant Chromohalobacter salexigens type strain (1H11(T)).</title>
        <authorList>
            <person name="Copeland A."/>
            <person name="O'Connor K."/>
            <person name="Lucas S."/>
            <person name="Lapidus A."/>
            <person name="Berry K.W."/>
            <person name="Detter J.C."/>
            <person name="Del Rio T.G."/>
            <person name="Hammon N."/>
            <person name="Dalin E."/>
            <person name="Tice H."/>
            <person name="Pitluck S."/>
            <person name="Bruce D."/>
            <person name="Goodwin L."/>
            <person name="Han C."/>
            <person name="Tapia R."/>
            <person name="Saunders E."/>
            <person name="Schmutz J."/>
            <person name="Brettin T."/>
            <person name="Larimer F."/>
            <person name="Land M."/>
            <person name="Hauser L."/>
            <person name="Vargas C."/>
            <person name="Nieto J.J."/>
            <person name="Kyrpides N.C."/>
            <person name="Ivanova N."/>
            <person name="Goker M."/>
            <person name="Klenk H.P."/>
            <person name="Csonka L.N."/>
            <person name="Woyke T."/>
        </authorList>
    </citation>
    <scope>NUCLEOTIDE SEQUENCE [LARGE SCALE GENOMIC DNA]</scope>
    <source>
        <strain>ATCC BAA-138 / DSM 3043 / CIP 106854 / NCIMB 13768 / 1H11</strain>
    </source>
</reference>
<keyword id="KW-0002">3D-structure</keyword>
<keyword id="KW-0032">Aminotransferase</keyword>
<keyword id="KW-0663">Pyridoxal phosphate</keyword>
<keyword id="KW-1185">Reference proteome</keyword>
<keyword id="KW-0808">Transferase</keyword>
<comment type="function">
    <text evidence="1">Catalyzes reversively the conversion of L-aspartate beta-semialdehyde (ASA) to L-2,4-diaminobutyrate (DABA) by transamination with L-glutamate.</text>
</comment>
<comment type="catalytic activity">
    <reaction>
        <text>L-2,4-diaminobutanoate + 2-oxoglutarate = L-aspartate 4-semialdehyde + L-glutamate</text>
        <dbReference type="Rhea" id="RHEA:11160"/>
        <dbReference type="ChEBI" id="CHEBI:16810"/>
        <dbReference type="ChEBI" id="CHEBI:29985"/>
        <dbReference type="ChEBI" id="CHEBI:58761"/>
        <dbReference type="ChEBI" id="CHEBI:537519"/>
        <dbReference type="EC" id="2.6.1.76"/>
    </reaction>
</comment>
<comment type="cofactor">
    <cofactor evidence="1">
        <name>pyridoxal 5'-phosphate</name>
        <dbReference type="ChEBI" id="CHEBI:597326"/>
    </cofactor>
</comment>
<comment type="pathway">
    <text>Amine and polyamine biosynthesis; ectoine biosynthesis; L-ectoine from L-aspartate 4-semialdehyde: step 1/3.</text>
</comment>
<comment type="subunit">
    <text evidence="1">Homohexamer.</text>
</comment>
<comment type="similarity">
    <text evidence="3">Belongs to the class-III pyridoxal-phosphate-dependent aminotransferase family.</text>
</comment>
<dbReference type="EC" id="2.6.1.76"/>
<dbReference type="EMBL" id="AJ011103">
    <property type="protein sequence ID" value="CAA09484.1"/>
    <property type="molecule type" value="Genomic_DNA"/>
</dbReference>
<dbReference type="EMBL" id="CP000285">
    <property type="protein sequence ID" value="ABE59229.1"/>
    <property type="molecule type" value="Genomic_DNA"/>
</dbReference>
<dbReference type="RefSeq" id="WP_011507175.1">
    <property type="nucleotide sequence ID" value="NC_007963.1"/>
</dbReference>
<dbReference type="PDB" id="6RL5">
    <property type="method" value="X-ray"/>
    <property type="resolution" value="2.45 A"/>
    <property type="chains" value="A/B/C/D/E/F/G/H=1-423"/>
</dbReference>
<dbReference type="PDBsum" id="6RL5"/>
<dbReference type="SMR" id="Q9ZEU7"/>
<dbReference type="STRING" id="290398.Csal_1877"/>
<dbReference type="GeneID" id="95334593"/>
<dbReference type="KEGG" id="csa:Csal_1877"/>
<dbReference type="eggNOG" id="COG0160">
    <property type="taxonomic scope" value="Bacteria"/>
</dbReference>
<dbReference type="HOGENOM" id="CLU_016922_10_0_6"/>
<dbReference type="OrthoDB" id="9801052at2"/>
<dbReference type="UniPathway" id="UPA00067">
    <property type="reaction ID" value="UER00121"/>
</dbReference>
<dbReference type="Proteomes" id="UP000000239">
    <property type="component" value="Chromosome"/>
</dbReference>
<dbReference type="GO" id="GO:0045303">
    <property type="term" value="F:diaminobutyrate-2-oxoglutarate transaminase activity"/>
    <property type="evidence" value="ECO:0007669"/>
    <property type="project" value="UniProtKB-EC"/>
</dbReference>
<dbReference type="GO" id="GO:0047307">
    <property type="term" value="F:diaminobutyrate-pyruvate transaminase activity"/>
    <property type="evidence" value="ECO:0007669"/>
    <property type="project" value="InterPro"/>
</dbReference>
<dbReference type="GO" id="GO:0030170">
    <property type="term" value="F:pyridoxal phosphate binding"/>
    <property type="evidence" value="ECO:0007669"/>
    <property type="project" value="InterPro"/>
</dbReference>
<dbReference type="GO" id="GO:0019491">
    <property type="term" value="P:ectoine biosynthetic process"/>
    <property type="evidence" value="ECO:0007669"/>
    <property type="project" value="UniProtKB-UniPathway"/>
</dbReference>
<dbReference type="CDD" id="cd00610">
    <property type="entry name" value="OAT_like"/>
    <property type="match status" value="1"/>
</dbReference>
<dbReference type="Gene3D" id="3.90.1150.10">
    <property type="entry name" value="Aspartate Aminotransferase, domain 1"/>
    <property type="match status" value="1"/>
</dbReference>
<dbReference type="Gene3D" id="3.40.640.10">
    <property type="entry name" value="Type I PLP-dependent aspartate aminotransferase-like (Major domain)"/>
    <property type="match status" value="1"/>
</dbReference>
<dbReference type="InterPro" id="IPR005814">
    <property type="entry name" value="Aminotrans_3"/>
</dbReference>
<dbReference type="InterPro" id="IPR049704">
    <property type="entry name" value="Aminotrans_3_PPA_site"/>
</dbReference>
<dbReference type="InterPro" id="IPR004637">
    <property type="entry name" value="Dat"/>
</dbReference>
<dbReference type="InterPro" id="IPR012773">
    <property type="entry name" value="Ectoine_EctB"/>
</dbReference>
<dbReference type="InterPro" id="IPR015424">
    <property type="entry name" value="PyrdxlP-dep_Trfase"/>
</dbReference>
<dbReference type="InterPro" id="IPR015421">
    <property type="entry name" value="PyrdxlP-dep_Trfase_major"/>
</dbReference>
<dbReference type="InterPro" id="IPR015422">
    <property type="entry name" value="PyrdxlP-dep_Trfase_small"/>
</dbReference>
<dbReference type="NCBIfam" id="TIGR00709">
    <property type="entry name" value="dat"/>
    <property type="match status" value="1"/>
</dbReference>
<dbReference type="NCBIfam" id="TIGR02407">
    <property type="entry name" value="ectoine_ectB"/>
    <property type="match status" value="1"/>
</dbReference>
<dbReference type="NCBIfam" id="NF006733">
    <property type="entry name" value="PRK09264.1"/>
    <property type="match status" value="1"/>
</dbReference>
<dbReference type="PANTHER" id="PTHR43552">
    <property type="entry name" value="DIAMINOBUTYRATE--2-OXOGLUTARATE AMINOTRANSFERASE"/>
    <property type="match status" value="1"/>
</dbReference>
<dbReference type="PANTHER" id="PTHR43552:SF2">
    <property type="entry name" value="DIAMINOBUTYRATE--2-OXOGLUTARATE TRANSAMINASE"/>
    <property type="match status" value="1"/>
</dbReference>
<dbReference type="Pfam" id="PF00202">
    <property type="entry name" value="Aminotran_3"/>
    <property type="match status" value="1"/>
</dbReference>
<dbReference type="PIRSF" id="PIRSF000521">
    <property type="entry name" value="Transaminase_4ab_Lys_Orn"/>
    <property type="match status" value="1"/>
</dbReference>
<dbReference type="SUPFAM" id="SSF53383">
    <property type="entry name" value="PLP-dependent transferases"/>
    <property type="match status" value="1"/>
</dbReference>
<dbReference type="PROSITE" id="PS00600">
    <property type="entry name" value="AA_TRANSFER_CLASS_3"/>
    <property type="match status" value="1"/>
</dbReference>
<accession>Q9ZEU7</accession>
<accession>Q1QWC9</accession>
<evidence type="ECO:0000250" key="1"/>
<evidence type="ECO:0000255" key="2"/>
<evidence type="ECO:0000305" key="3"/>
<evidence type="ECO:0007829" key="4">
    <source>
        <dbReference type="PDB" id="6RL5"/>
    </source>
</evidence>
<sequence length="423" mass="46200">MQTQILERMESEVRTYSRSFPTVFTEAKGARLHAEDGNQYIDFLAGAGTLNYGHNHPKLKQALADYIASDGIVHGLDMWSAAKRDYLETLEEVILKPRGLDYKVHLPGPTGTNAVEAAIRLARNAKGRHNIVTFTNGFHGVTMGALATTGNRKFREATGGIPTQGASFMPFDGYMGEGVDTLSYFEKLLGDNSGGLDVPAAVIIETVQGEGGINPAGIPWLQRLEKICRDHDMLLIVDDIQAGCGRTGKFFSFEHAGITPDIVTNSKSLSGFGLPFAHVLMRPELDIWKPGQYNGTFRGFNLAFVTAAAAMRHFWSDDTFERDVQRKGRVVEDRFQKLASFMTEKGHPASERGRGLMRGLDVGDGDMADKITAQAFKNGLIIETSGHSGQVIKCLCPLTITDEDLVGGLDILEQSVKEVFGQA</sequence>
<name>ECTB_CHRSD</name>
<protein>
    <recommendedName>
        <fullName>Diaminobutyrate--2-oxoglutarate transaminase</fullName>
        <ecNumber>2.6.1.76</ecNumber>
    </recommendedName>
    <alternativeName>
        <fullName>DABA aminotransferase</fullName>
    </alternativeName>
    <alternativeName>
        <fullName>Diaminobutyrate--2-oxoglutarate aminotransferase</fullName>
    </alternativeName>
    <alternativeName>
        <fullName>L-2,4-diaminobutyric acid transaminase</fullName>
    </alternativeName>
</protein>
<gene>
    <name type="primary">ectB</name>
    <name type="ordered locus">Csal_1877</name>
</gene>
<organism>
    <name type="scientific">Chromohalobacter salexigens (strain ATCC BAA-138 / DSM 3043 / CIP 106854 / NCIMB 13768 / 1H11)</name>
    <dbReference type="NCBI Taxonomy" id="290398"/>
    <lineage>
        <taxon>Bacteria</taxon>
        <taxon>Pseudomonadati</taxon>
        <taxon>Pseudomonadota</taxon>
        <taxon>Gammaproteobacteria</taxon>
        <taxon>Oceanospirillales</taxon>
        <taxon>Halomonadaceae</taxon>
        <taxon>Chromohalobacter</taxon>
    </lineage>
</organism>
<feature type="chain" id="PRO_0000120522" description="Diaminobutyrate--2-oxoglutarate transaminase">
    <location>
        <begin position="1"/>
        <end position="423"/>
    </location>
</feature>
<feature type="modified residue" description="N6-(pyridoxal phosphate)lysine" evidence="2">
    <location>
        <position position="267"/>
    </location>
</feature>
<feature type="helix" evidence="4">
    <location>
        <begin position="16"/>
        <end position="19"/>
    </location>
</feature>
<feature type="strand" evidence="4">
    <location>
        <begin position="22"/>
        <end position="29"/>
    </location>
</feature>
<feature type="strand" evidence="4">
    <location>
        <begin position="31"/>
        <end position="34"/>
    </location>
</feature>
<feature type="strand" evidence="4">
    <location>
        <begin position="39"/>
        <end position="44"/>
    </location>
</feature>
<feature type="helix" evidence="4">
    <location>
        <begin position="45"/>
        <end position="48"/>
    </location>
</feature>
<feature type="helix" evidence="4">
    <location>
        <begin position="57"/>
        <end position="68"/>
    </location>
</feature>
<feature type="helix" evidence="4">
    <location>
        <begin position="81"/>
        <end position="93"/>
    </location>
</feature>
<feature type="helix" evidence="4">
    <location>
        <begin position="96"/>
        <end position="98"/>
    </location>
</feature>
<feature type="strand" evidence="4">
    <location>
        <begin position="103"/>
        <end position="105"/>
    </location>
</feature>
<feature type="strand" evidence="4">
    <location>
        <begin position="108"/>
        <end position="110"/>
    </location>
</feature>
<feature type="helix" evidence="4">
    <location>
        <begin position="111"/>
        <end position="126"/>
    </location>
</feature>
<feature type="strand" evidence="4">
    <location>
        <begin position="130"/>
        <end position="134"/>
    </location>
</feature>
<feature type="helix" evidence="4">
    <location>
        <begin position="143"/>
        <end position="146"/>
    </location>
</feature>
<feature type="helix" evidence="4">
    <location>
        <begin position="152"/>
        <end position="156"/>
    </location>
</feature>
<feature type="strand" evidence="4">
    <location>
        <begin position="158"/>
        <end position="160"/>
    </location>
</feature>
<feature type="strand" evidence="4">
    <location>
        <begin position="165"/>
        <end position="169"/>
    </location>
</feature>
<feature type="turn" evidence="4">
    <location>
        <begin position="172"/>
        <end position="175"/>
    </location>
</feature>
<feature type="strand" evidence="4">
    <location>
        <begin position="176"/>
        <end position="178"/>
    </location>
</feature>
<feature type="helix" evidence="4">
    <location>
        <begin position="181"/>
        <end position="189"/>
    </location>
</feature>
<feature type="strand" evidence="4">
    <location>
        <begin position="199"/>
        <end position="204"/>
    </location>
</feature>
<feature type="strand" evidence="4">
    <location>
        <begin position="206"/>
        <end position="208"/>
    </location>
</feature>
<feature type="turn" evidence="4">
    <location>
        <begin position="209"/>
        <end position="212"/>
    </location>
</feature>
<feature type="strand" evidence="4">
    <location>
        <begin position="213"/>
        <end position="215"/>
    </location>
</feature>
<feature type="helix" evidence="4">
    <location>
        <begin position="218"/>
        <end position="229"/>
    </location>
</feature>
<feature type="turn" evidence="4">
    <location>
        <begin position="230"/>
        <end position="232"/>
    </location>
</feature>
<feature type="strand" evidence="4">
    <location>
        <begin position="234"/>
        <end position="238"/>
    </location>
</feature>
<feature type="turn" evidence="4">
    <location>
        <begin position="240"/>
        <end position="247"/>
    </location>
</feature>
<feature type="strand" evidence="4">
    <location>
        <begin position="248"/>
        <end position="251"/>
    </location>
</feature>
<feature type="helix" evidence="4">
    <location>
        <begin position="252"/>
        <end position="256"/>
    </location>
</feature>
<feature type="strand" evidence="4">
    <location>
        <begin position="261"/>
        <end position="265"/>
    </location>
</feature>
<feature type="helix" evidence="4">
    <location>
        <begin position="267"/>
        <end position="270"/>
    </location>
</feature>
<feature type="strand" evidence="4">
    <location>
        <begin position="271"/>
        <end position="273"/>
    </location>
</feature>
<feature type="strand" evidence="4">
    <location>
        <begin position="278"/>
        <end position="281"/>
    </location>
</feature>
<feature type="helix" evidence="4">
    <location>
        <begin position="283"/>
        <end position="285"/>
    </location>
</feature>
<feature type="turn" evidence="4">
    <location>
        <begin position="296"/>
        <end position="299"/>
    </location>
</feature>
<feature type="helix" evidence="4">
    <location>
        <begin position="301"/>
        <end position="314"/>
    </location>
</feature>
<feature type="strand" evidence="4">
    <location>
        <begin position="315"/>
        <end position="318"/>
    </location>
</feature>
<feature type="helix" evidence="4">
    <location>
        <begin position="319"/>
        <end position="344"/>
    </location>
</feature>
<feature type="strand" evidence="4">
    <location>
        <begin position="350"/>
        <end position="354"/>
    </location>
</feature>
<feature type="strand" evidence="4">
    <location>
        <begin position="357"/>
        <end position="361"/>
    </location>
</feature>
<feature type="helix" evidence="4">
    <location>
        <begin position="365"/>
        <end position="377"/>
    </location>
</feature>
<feature type="strand" evidence="4">
    <location>
        <begin position="383"/>
        <end position="389"/>
    </location>
</feature>
<feature type="strand" evidence="4">
    <location>
        <begin position="391"/>
        <end position="394"/>
    </location>
</feature>
<feature type="helix" evidence="4">
    <location>
        <begin position="402"/>
        <end position="419"/>
    </location>
</feature>
<proteinExistence type="evidence at protein level"/>